<accession>Q2KAV8</accession>
<gene>
    <name evidence="1" type="primary">ydiU</name>
    <name evidence="1" type="synonym">selO</name>
    <name type="ordered locus">RHE_CH01223</name>
</gene>
<keyword id="KW-0067">ATP-binding</keyword>
<keyword id="KW-0460">Magnesium</keyword>
<keyword id="KW-0464">Manganese</keyword>
<keyword id="KW-0479">Metal-binding</keyword>
<keyword id="KW-0547">Nucleotide-binding</keyword>
<keyword id="KW-0548">Nucleotidyltransferase</keyword>
<keyword id="KW-1185">Reference proteome</keyword>
<keyword id="KW-0808">Transferase</keyword>
<name>SELO_RHIEC</name>
<protein>
    <recommendedName>
        <fullName evidence="1">Protein nucleotidyltransferase YdiU</fullName>
        <ecNumber evidence="1">2.7.7.-</ecNumber>
    </recommendedName>
    <alternativeName>
        <fullName evidence="1">Protein adenylyltransferase YdiU</fullName>
        <ecNumber evidence="1">2.7.7.108</ecNumber>
    </alternativeName>
    <alternativeName>
        <fullName evidence="1">Protein uridylyltransferase YdiU</fullName>
        <ecNumber evidence="1">2.7.7.-</ecNumber>
    </alternativeName>
</protein>
<feature type="chain" id="PRO_0000271852" description="Protein nucleotidyltransferase YdiU">
    <location>
        <begin position="1"/>
        <end position="500"/>
    </location>
</feature>
<feature type="active site" description="Proton acceptor" evidence="1">
    <location>
        <position position="258"/>
    </location>
</feature>
<feature type="binding site" evidence="1">
    <location>
        <position position="96"/>
    </location>
    <ligand>
        <name>ATP</name>
        <dbReference type="ChEBI" id="CHEBI:30616"/>
    </ligand>
</feature>
<feature type="binding site" evidence="1">
    <location>
        <position position="98"/>
    </location>
    <ligand>
        <name>ATP</name>
        <dbReference type="ChEBI" id="CHEBI:30616"/>
    </ligand>
</feature>
<feature type="binding site" evidence="1">
    <location>
        <position position="99"/>
    </location>
    <ligand>
        <name>ATP</name>
        <dbReference type="ChEBI" id="CHEBI:30616"/>
    </ligand>
</feature>
<feature type="binding site" evidence="1">
    <location>
        <position position="119"/>
    </location>
    <ligand>
        <name>ATP</name>
        <dbReference type="ChEBI" id="CHEBI:30616"/>
    </ligand>
</feature>
<feature type="binding site" evidence="1">
    <location>
        <position position="131"/>
    </location>
    <ligand>
        <name>ATP</name>
        <dbReference type="ChEBI" id="CHEBI:30616"/>
    </ligand>
</feature>
<feature type="binding site" evidence="1">
    <location>
        <position position="132"/>
    </location>
    <ligand>
        <name>ATP</name>
        <dbReference type="ChEBI" id="CHEBI:30616"/>
    </ligand>
</feature>
<feature type="binding site" evidence="1">
    <location>
        <position position="182"/>
    </location>
    <ligand>
        <name>ATP</name>
        <dbReference type="ChEBI" id="CHEBI:30616"/>
    </ligand>
</feature>
<feature type="binding site" evidence="1">
    <location>
        <position position="189"/>
    </location>
    <ligand>
        <name>ATP</name>
        <dbReference type="ChEBI" id="CHEBI:30616"/>
    </ligand>
</feature>
<feature type="binding site" evidence="1">
    <location>
        <position position="259"/>
    </location>
    <ligand>
        <name>Mg(2+)</name>
        <dbReference type="ChEBI" id="CHEBI:18420"/>
    </ligand>
</feature>
<feature type="binding site" evidence="1">
    <location>
        <position position="268"/>
    </location>
    <ligand>
        <name>ATP</name>
        <dbReference type="ChEBI" id="CHEBI:30616"/>
    </ligand>
</feature>
<feature type="binding site" evidence="1">
    <location>
        <position position="268"/>
    </location>
    <ligand>
        <name>Mg(2+)</name>
        <dbReference type="ChEBI" id="CHEBI:18420"/>
    </ligand>
</feature>
<reference key="1">
    <citation type="journal article" date="2006" name="Proc. Natl. Acad. Sci. U.S.A.">
        <title>The partitioned Rhizobium etli genome: genetic and metabolic redundancy in seven interacting replicons.</title>
        <authorList>
            <person name="Gonzalez V."/>
            <person name="Santamaria R.I."/>
            <person name="Bustos P."/>
            <person name="Hernandez-Gonzalez I."/>
            <person name="Medrano-Soto A."/>
            <person name="Moreno-Hagelsieb G."/>
            <person name="Janga S.C."/>
            <person name="Ramirez M.A."/>
            <person name="Jimenez-Jacinto V."/>
            <person name="Collado-Vides J."/>
            <person name="Davila G."/>
        </authorList>
    </citation>
    <scope>NUCLEOTIDE SEQUENCE [LARGE SCALE GENOMIC DNA]</scope>
    <source>
        <strain>ATCC 51251 / DSM 11541 / JCM 21823 / NBRC 15573 / CFN 42</strain>
    </source>
</reference>
<proteinExistence type="inferred from homology"/>
<organism>
    <name type="scientific">Rhizobium etli (strain ATCC 51251 / DSM 11541 / JCM 21823 / NBRC 15573 / CFN 42)</name>
    <dbReference type="NCBI Taxonomy" id="347834"/>
    <lineage>
        <taxon>Bacteria</taxon>
        <taxon>Pseudomonadati</taxon>
        <taxon>Pseudomonadota</taxon>
        <taxon>Alphaproteobacteria</taxon>
        <taxon>Hyphomicrobiales</taxon>
        <taxon>Rhizobiaceae</taxon>
        <taxon>Rhizobium/Agrobacterium group</taxon>
        <taxon>Rhizobium</taxon>
    </lineage>
</organism>
<comment type="function">
    <text evidence="1">Nucleotidyltransferase involved in the post-translational modification of proteins. It can catalyze the addition of adenosine monophosphate (AMP) or uridine monophosphate (UMP) to a protein, resulting in modifications known as AMPylation and UMPylation.</text>
</comment>
<comment type="catalytic activity">
    <reaction evidence="1">
        <text>L-seryl-[protein] + ATP = 3-O-(5'-adenylyl)-L-seryl-[protein] + diphosphate</text>
        <dbReference type="Rhea" id="RHEA:58120"/>
        <dbReference type="Rhea" id="RHEA-COMP:9863"/>
        <dbReference type="Rhea" id="RHEA-COMP:15073"/>
        <dbReference type="ChEBI" id="CHEBI:29999"/>
        <dbReference type="ChEBI" id="CHEBI:30616"/>
        <dbReference type="ChEBI" id="CHEBI:33019"/>
        <dbReference type="ChEBI" id="CHEBI:142516"/>
        <dbReference type="EC" id="2.7.7.108"/>
    </reaction>
</comment>
<comment type="catalytic activity">
    <reaction evidence="1">
        <text>L-threonyl-[protein] + ATP = 3-O-(5'-adenylyl)-L-threonyl-[protein] + diphosphate</text>
        <dbReference type="Rhea" id="RHEA:54292"/>
        <dbReference type="Rhea" id="RHEA-COMP:11060"/>
        <dbReference type="Rhea" id="RHEA-COMP:13847"/>
        <dbReference type="ChEBI" id="CHEBI:30013"/>
        <dbReference type="ChEBI" id="CHEBI:30616"/>
        <dbReference type="ChEBI" id="CHEBI:33019"/>
        <dbReference type="ChEBI" id="CHEBI:138113"/>
        <dbReference type="EC" id="2.7.7.108"/>
    </reaction>
</comment>
<comment type="catalytic activity">
    <reaction evidence="1">
        <text>L-tyrosyl-[protein] + ATP = O-(5'-adenylyl)-L-tyrosyl-[protein] + diphosphate</text>
        <dbReference type="Rhea" id="RHEA:54288"/>
        <dbReference type="Rhea" id="RHEA-COMP:10136"/>
        <dbReference type="Rhea" id="RHEA-COMP:13846"/>
        <dbReference type="ChEBI" id="CHEBI:30616"/>
        <dbReference type="ChEBI" id="CHEBI:33019"/>
        <dbReference type="ChEBI" id="CHEBI:46858"/>
        <dbReference type="ChEBI" id="CHEBI:83624"/>
        <dbReference type="EC" id="2.7.7.108"/>
    </reaction>
</comment>
<comment type="catalytic activity">
    <reaction evidence="1">
        <text>L-histidyl-[protein] + UTP = N(tele)-(5'-uridylyl)-L-histidyl-[protein] + diphosphate</text>
        <dbReference type="Rhea" id="RHEA:83891"/>
        <dbReference type="Rhea" id="RHEA-COMP:9745"/>
        <dbReference type="Rhea" id="RHEA-COMP:20239"/>
        <dbReference type="ChEBI" id="CHEBI:29979"/>
        <dbReference type="ChEBI" id="CHEBI:33019"/>
        <dbReference type="ChEBI" id="CHEBI:46398"/>
        <dbReference type="ChEBI" id="CHEBI:233474"/>
    </reaction>
</comment>
<comment type="catalytic activity">
    <reaction evidence="1">
        <text>L-seryl-[protein] + UTP = O-(5'-uridylyl)-L-seryl-[protein] + diphosphate</text>
        <dbReference type="Rhea" id="RHEA:64604"/>
        <dbReference type="Rhea" id="RHEA-COMP:9863"/>
        <dbReference type="Rhea" id="RHEA-COMP:16635"/>
        <dbReference type="ChEBI" id="CHEBI:29999"/>
        <dbReference type="ChEBI" id="CHEBI:33019"/>
        <dbReference type="ChEBI" id="CHEBI:46398"/>
        <dbReference type="ChEBI" id="CHEBI:156051"/>
    </reaction>
</comment>
<comment type="catalytic activity">
    <reaction evidence="1">
        <text>L-tyrosyl-[protein] + UTP = O-(5'-uridylyl)-L-tyrosyl-[protein] + diphosphate</text>
        <dbReference type="Rhea" id="RHEA:83887"/>
        <dbReference type="Rhea" id="RHEA-COMP:10136"/>
        <dbReference type="Rhea" id="RHEA-COMP:20238"/>
        <dbReference type="ChEBI" id="CHEBI:33019"/>
        <dbReference type="ChEBI" id="CHEBI:46398"/>
        <dbReference type="ChEBI" id="CHEBI:46858"/>
        <dbReference type="ChEBI" id="CHEBI:90602"/>
    </reaction>
</comment>
<comment type="cofactor">
    <cofactor evidence="1">
        <name>Mg(2+)</name>
        <dbReference type="ChEBI" id="CHEBI:18420"/>
    </cofactor>
    <cofactor evidence="1">
        <name>Mn(2+)</name>
        <dbReference type="ChEBI" id="CHEBI:29035"/>
    </cofactor>
</comment>
<comment type="similarity">
    <text evidence="1">Belongs to the SELO family.</text>
</comment>
<comment type="sequence caution" evidence="2">
    <conflict type="erroneous initiation">
        <sequence resource="EMBL-CDS" id="ABC90028"/>
    </conflict>
</comment>
<sequence length="500" mass="54443">MTSALEKNRPGAAFAFDNSYAGLPQRFFAPQAPTPVAEPWLIKLNEPLAEELGLDVEVLRRDGAAIFSGNLVPEGALPLAMAYAGHQFGGFSPVLGDGRAILLGEVVGRNGKRYDIQLKGAGQTPFSRRGDGRAALGPVLREYIISEAMFALGIPATRALAAVTTGEPVYREEVLPGAVFTRVAASHIRVGTFQFFAARGDAEGVRALADYVIDRHYPELKEAENPYAALFEAVSERQAALIARWLHIGFIHGVMNTDNMTVSGETIDFGPCAFMDIYNPSTVFSSIDHHGRYAYANQPAIGQWNLARLGETLLPLIDADQDSAVDKANAVIRAYGERFQAHWLKGMRAKIGLEGEEDGDLELVQALLALMQAQGADFTLTFRRLSDLAGDDAAEPGFATSFREPDSSGEWLARWRGRLSRDPQTAAGRAAAMRSVNPVFIPRNHRVEQAIEAAVESADFSLFEALLKVLAKPYEDQPSFAAYMEPPKPNERVLQTFCGT</sequence>
<evidence type="ECO:0000255" key="1">
    <source>
        <dbReference type="HAMAP-Rule" id="MF_00692"/>
    </source>
</evidence>
<evidence type="ECO:0000305" key="2"/>
<dbReference type="EC" id="2.7.7.-" evidence="1"/>
<dbReference type="EC" id="2.7.7.108" evidence="1"/>
<dbReference type="EMBL" id="CP000133">
    <property type="protein sequence ID" value="ABC90028.1"/>
    <property type="status" value="ALT_INIT"/>
    <property type="molecule type" value="Genomic_DNA"/>
</dbReference>
<dbReference type="RefSeq" id="WP_042119210.1">
    <property type="nucleotide sequence ID" value="NC_007761.1"/>
</dbReference>
<dbReference type="SMR" id="Q2KAV8"/>
<dbReference type="KEGG" id="ret:RHE_CH01223"/>
<dbReference type="eggNOG" id="COG0397">
    <property type="taxonomic scope" value="Bacteria"/>
</dbReference>
<dbReference type="HOGENOM" id="CLU_010245_4_0_5"/>
<dbReference type="OrthoDB" id="9776281at2"/>
<dbReference type="Proteomes" id="UP000001936">
    <property type="component" value="Chromosome"/>
</dbReference>
<dbReference type="GO" id="GO:0070733">
    <property type="term" value="F:AMPylase activity"/>
    <property type="evidence" value="ECO:0007669"/>
    <property type="project" value="RHEA"/>
</dbReference>
<dbReference type="GO" id="GO:0005524">
    <property type="term" value="F:ATP binding"/>
    <property type="evidence" value="ECO:0007669"/>
    <property type="project" value="UniProtKB-UniRule"/>
</dbReference>
<dbReference type="GO" id="GO:0000287">
    <property type="term" value="F:magnesium ion binding"/>
    <property type="evidence" value="ECO:0007669"/>
    <property type="project" value="UniProtKB-UniRule"/>
</dbReference>
<dbReference type="HAMAP" id="MF_00692">
    <property type="entry name" value="YdiU_SelO"/>
    <property type="match status" value="1"/>
</dbReference>
<dbReference type="InterPro" id="IPR003846">
    <property type="entry name" value="SelO"/>
</dbReference>
<dbReference type="NCBIfam" id="NF000658">
    <property type="entry name" value="PRK00029.1"/>
    <property type="match status" value="1"/>
</dbReference>
<dbReference type="PANTHER" id="PTHR32057">
    <property type="entry name" value="PROTEIN ADENYLYLTRANSFERASE SELO, MITOCHONDRIAL"/>
    <property type="match status" value="1"/>
</dbReference>
<dbReference type="PANTHER" id="PTHR32057:SF14">
    <property type="entry name" value="PROTEIN ADENYLYLTRANSFERASE SELO, MITOCHONDRIAL"/>
    <property type="match status" value="1"/>
</dbReference>
<dbReference type="Pfam" id="PF02696">
    <property type="entry name" value="SelO"/>
    <property type="match status" value="1"/>
</dbReference>